<keyword id="KW-0002">3D-structure</keyword>
<keyword id="KW-0903">Direct protein sequencing</keyword>
<keyword id="KW-1185">Reference proteome</keyword>
<keyword id="KW-0687">Ribonucleoprotein</keyword>
<keyword id="KW-0689">Ribosomal protein</keyword>
<keyword id="KW-0694">RNA-binding</keyword>
<keyword id="KW-0699">rRNA-binding</keyword>
<proteinExistence type="evidence at protein level"/>
<gene>
    <name type="primary">rplD</name>
    <name type="ordered locus">DR_0312</name>
</gene>
<sequence length="205" mass="22278">MAQINVIGQNGGRTIELPLPEVNSGVLHEVVTWQLASRRRGTASTRTRAQVSKTGRKMYGQKGTGNARHGDRSVPTFVGGGVAFGPKPRSYDYTLPRQVRQLGLAMAIASRQEGGKLVAVDGFDIADAKTKNFISWAKQNGLDGTEKVLLVTDDENTRRAARNVSWVSVLPVAGVNVYDILRHDRLVIDAAALEIVEEEAGEEQQ</sequence>
<dbReference type="EMBL" id="AE000513">
    <property type="protein sequence ID" value="AAF09893.1"/>
    <property type="molecule type" value="Genomic_DNA"/>
</dbReference>
<dbReference type="PIR" id="H75533">
    <property type="entry name" value="H75533"/>
</dbReference>
<dbReference type="RefSeq" id="NP_294035.1">
    <property type="nucleotide sequence ID" value="NC_001263.1"/>
</dbReference>
<dbReference type="RefSeq" id="WP_010886957.1">
    <property type="nucleotide sequence ID" value="NC_001263.1"/>
</dbReference>
<dbReference type="PDB" id="1J5A">
    <property type="method" value="X-ray"/>
    <property type="resolution" value="3.50 A"/>
    <property type="chains" value="K=1-205"/>
</dbReference>
<dbReference type="PDB" id="1JZX">
    <property type="method" value="X-ray"/>
    <property type="resolution" value="3.10 A"/>
    <property type="chains" value="K=1-205"/>
</dbReference>
<dbReference type="PDB" id="1JZY">
    <property type="method" value="X-ray"/>
    <property type="resolution" value="3.50 A"/>
    <property type="chains" value="K=1-205"/>
</dbReference>
<dbReference type="PDB" id="1JZZ">
    <property type="method" value="X-ray"/>
    <property type="resolution" value="3.80 A"/>
    <property type="chains" value="K=1-205"/>
</dbReference>
<dbReference type="PDB" id="1K01">
    <property type="method" value="X-ray"/>
    <property type="resolution" value="3.50 A"/>
    <property type="chains" value="K=1-205"/>
</dbReference>
<dbReference type="PDB" id="1NKW">
    <property type="method" value="X-ray"/>
    <property type="resolution" value="3.10 A"/>
    <property type="chains" value="C=1-205"/>
</dbReference>
<dbReference type="PDB" id="1NWX">
    <property type="method" value="X-ray"/>
    <property type="resolution" value="3.50 A"/>
    <property type="chains" value="C=2-205"/>
</dbReference>
<dbReference type="PDB" id="1NWY">
    <property type="method" value="X-ray"/>
    <property type="resolution" value="3.30 A"/>
    <property type="chains" value="C=2-205"/>
</dbReference>
<dbReference type="PDB" id="1SM1">
    <property type="method" value="X-ray"/>
    <property type="resolution" value="3.42 A"/>
    <property type="chains" value="C=1-205"/>
</dbReference>
<dbReference type="PDB" id="1XBP">
    <property type="method" value="X-ray"/>
    <property type="resolution" value="3.50 A"/>
    <property type="chains" value="C=2-205"/>
</dbReference>
<dbReference type="PDB" id="2ZJP">
    <property type="method" value="X-ray"/>
    <property type="resolution" value="3.70 A"/>
    <property type="chains" value="C=1-205"/>
</dbReference>
<dbReference type="PDB" id="2ZJQ">
    <property type="method" value="X-ray"/>
    <property type="resolution" value="3.30 A"/>
    <property type="chains" value="C=1-205"/>
</dbReference>
<dbReference type="PDB" id="2ZJR">
    <property type="method" value="X-ray"/>
    <property type="resolution" value="2.91 A"/>
    <property type="chains" value="C=1-205"/>
</dbReference>
<dbReference type="PDB" id="3CF5">
    <property type="method" value="X-ray"/>
    <property type="resolution" value="3.30 A"/>
    <property type="chains" value="C=1-205"/>
</dbReference>
<dbReference type="PDB" id="3DLL">
    <property type="method" value="X-ray"/>
    <property type="resolution" value="3.50 A"/>
    <property type="chains" value="C=1-205"/>
</dbReference>
<dbReference type="PDB" id="3PIO">
    <property type="method" value="X-ray"/>
    <property type="resolution" value="3.25 A"/>
    <property type="chains" value="C=1-205"/>
</dbReference>
<dbReference type="PDB" id="3PIP">
    <property type="method" value="X-ray"/>
    <property type="resolution" value="3.45 A"/>
    <property type="chains" value="C=1-205"/>
</dbReference>
<dbReference type="PDB" id="4IO9">
    <property type="method" value="X-ray"/>
    <property type="resolution" value="3.20 A"/>
    <property type="chains" value="C=1-205"/>
</dbReference>
<dbReference type="PDB" id="4IOA">
    <property type="method" value="X-ray"/>
    <property type="resolution" value="3.20 A"/>
    <property type="chains" value="C=1-205"/>
</dbReference>
<dbReference type="PDB" id="4IOC">
    <property type="method" value="X-ray"/>
    <property type="resolution" value="3.60 A"/>
    <property type="chains" value="C=1-205"/>
</dbReference>
<dbReference type="PDB" id="4U67">
    <property type="method" value="X-ray"/>
    <property type="resolution" value="3.65 A"/>
    <property type="chains" value="C=1-205"/>
</dbReference>
<dbReference type="PDB" id="4V49">
    <property type="method" value="X-ray"/>
    <property type="resolution" value="8.70 A"/>
    <property type="chains" value="C=2-198"/>
</dbReference>
<dbReference type="PDB" id="4V4A">
    <property type="method" value="X-ray"/>
    <property type="resolution" value="9.50 A"/>
    <property type="chains" value="C=2-198"/>
</dbReference>
<dbReference type="PDB" id="4WFN">
    <property type="method" value="X-ray"/>
    <property type="resolution" value="3.54 A"/>
    <property type="chains" value="C=1-205"/>
</dbReference>
<dbReference type="PDB" id="5DM6">
    <property type="method" value="X-ray"/>
    <property type="resolution" value="2.90 A"/>
    <property type="chains" value="C=2-198"/>
</dbReference>
<dbReference type="PDB" id="5DM7">
    <property type="method" value="X-ray"/>
    <property type="resolution" value="3.00 A"/>
    <property type="chains" value="C=2-198"/>
</dbReference>
<dbReference type="PDB" id="5JVG">
    <property type="method" value="X-ray"/>
    <property type="resolution" value="3.43 A"/>
    <property type="chains" value="C=1-205"/>
</dbReference>
<dbReference type="PDB" id="5JVH">
    <property type="method" value="X-ray"/>
    <property type="resolution" value="3.58 A"/>
    <property type="chains" value="C=1-205"/>
</dbReference>
<dbReference type="PDB" id="7A0R">
    <property type="method" value="X-ray"/>
    <property type="resolution" value="3.30 A"/>
    <property type="chains" value="C=2-198"/>
</dbReference>
<dbReference type="PDB" id="7A0S">
    <property type="method" value="X-ray"/>
    <property type="resolution" value="3.22 A"/>
    <property type="chains" value="C=1-205"/>
</dbReference>
<dbReference type="PDB" id="7A18">
    <property type="method" value="X-ray"/>
    <property type="resolution" value="3.40 A"/>
    <property type="chains" value="C=2-196"/>
</dbReference>
<dbReference type="PDBsum" id="1J5A"/>
<dbReference type="PDBsum" id="1JZX"/>
<dbReference type="PDBsum" id="1JZY"/>
<dbReference type="PDBsum" id="1JZZ"/>
<dbReference type="PDBsum" id="1K01"/>
<dbReference type="PDBsum" id="1NKW"/>
<dbReference type="PDBsum" id="1NWX"/>
<dbReference type="PDBsum" id="1NWY"/>
<dbReference type="PDBsum" id="1SM1"/>
<dbReference type="PDBsum" id="1XBP"/>
<dbReference type="PDBsum" id="2ZJP"/>
<dbReference type="PDBsum" id="2ZJQ"/>
<dbReference type="PDBsum" id="2ZJR"/>
<dbReference type="PDBsum" id="3CF5"/>
<dbReference type="PDBsum" id="3DLL"/>
<dbReference type="PDBsum" id="3PIO"/>
<dbReference type="PDBsum" id="3PIP"/>
<dbReference type="PDBsum" id="4IO9"/>
<dbReference type="PDBsum" id="4IOA"/>
<dbReference type="PDBsum" id="4IOC"/>
<dbReference type="PDBsum" id="4U67"/>
<dbReference type="PDBsum" id="4V49"/>
<dbReference type="PDBsum" id="4V4A"/>
<dbReference type="PDBsum" id="4WFN"/>
<dbReference type="PDBsum" id="5DM6"/>
<dbReference type="PDBsum" id="5DM7"/>
<dbReference type="PDBsum" id="5JVG"/>
<dbReference type="PDBsum" id="5JVH"/>
<dbReference type="PDBsum" id="7A0R"/>
<dbReference type="PDBsum" id="7A0S"/>
<dbReference type="PDBsum" id="7A18"/>
<dbReference type="SMR" id="Q9RXK1"/>
<dbReference type="FunCoup" id="Q9RXK1">
    <property type="interactions" value="470"/>
</dbReference>
<dbReference type="IntAct" id="Q9RXK1">
    <property type="interactions" value="1"/>
</dbReference>
<dbReference type="STRING" id="243230.DR_0312"/>
<dbReference type="PaxDb" id="243230-DR_0312"/>
<dbReference type="EnsemblBacteria" id="AAF09893">
    <property type="protein sequence ID" value="AAF09893"/>
    <property type="gene ID" value="DR_0312"/>
</dbReference>
<dbReference type="GeneID" id="69516544"/>
<dbReference type="KEGG" id="dra:DR_0312"/>
<dbReference type="PATRIC" id="fig|243230.17.peg.478"/>
<dbReference type="eggNOG" id="COG0088">
    <property type="taxonomic scope" value="Bacteria"/>
</dbReference>
<dbReference type="HOGENOM" id="CLU_041575_5_1_0"/>
<dbReference type="InParanoid" id="Q9RXK1"/>
<dbReference type="OrthoDB" id="9803201at2"/>
<dbReference type="EvolutionaryTrace" id="Q9RXK1"/>
<dbReference type="Proteomes" id="UP000002524">
    <property type="component" value="Chromosome 1"/>
</dbReference>
<dbReference type="GO" id="GO:1990904">
    <property type="term" value="C:ribonucleoprotein complex"/>
    <property type="evidence" value="ECO:0007669"/>
    <property type="project" value="UniProtKB-KW"/>
</dbReference>
<dbReference type="GO" id="GO:0005840">
    <property type="term" value="C:ribosome"/>
    <property type="evidence" value="ECO:0007669"/>
    <property type="project" value="UniProtKB-KW"/>
</dbReference>
<dbReference type="GO" id="GO:0019843">
    <property type="term" value="F:rRNA binding"/>
    <property type="evidence" value="ECO:0007669"/>
    <property type="project" value="UniProtKB-UniRule"/>
</dbReference>
<dbReference type="GO" id="GO:0003735">
    <property type="term" value="F:structural constituent of ribosome"/>
    <property type="evidence" value="ECO:0000318"/>
    <property type="project" value="GO_Central"/>
</dbReference>
<dbReference type="GO" id="GO:0006412">
    <property type="term" value="P:translation"/>
    <property type="evidence" value="ECO:0007669"/>
    <property type="project" value="UniProtKB-UniRule"/>
</dbReference>
<dbReference type="FunFam" id="3.40.1370.10:FF:000004">
    <property type="entry name" value="50S ribosomal protein L4"/>
    <property type="match status" value="1"/>
</dbReference>
<dbReference type="Gene3D" id="3.40.1370.10">
    <property type="match status" value="1"/>
</dbReference>
<dbReference type="HAMAP" id="MF_01328_B">
    <property type="entry name" value="Ribosomal_uL4_B"/>
    <property type="match status" value="1"/>
</dbReference>
<dbReference type="InterPro" id="IPR002136">
    <property type="entry name" value="Ribosomal_uL4"/>
</dbReference>
<dbReference type="InterPro" id="IPR013005">
    <property type="entry name" value="Ribosomal_uL4-like"/>
</dbReference>
<dbReference type="InterPro" id="IPR023574">
    <property type="entry name" value="Ribosomal_uL4_dom_sf"/>
</dbReference>
<dbReference type="NCBIfam" id="TIGR03953">
    <property type="entry name" value="rplD_bact"/>
    <property type="match status" value="1"/>
</dbReference>
<dbReference type="PANTHER" id="PTHR10746">
    <property type="entry name" value="50S RIBOSOMAL PROTEIN L4"/>
    <property type="match status" value="1"/>
</dbReference>
<dbReference type="PANTHER" id="PTHR10746:SF6">
    <property type="entry name" value="LARGE RIBOSOMAL SUBUNIT PROTEIN UL4M"/>
    <property type="match status" value="1"/>
</dbReference>
<dbReference type="Pfam" id="PF00573">
    <property type="entry name" value="Ribosomal_L4"/>
    <property type="match status" value="1"/>
</dbReference>
<dbReference type="SUPFAM" id="SSF52166">
    <property type="entry name" value="Ribosomal protein L4"/>
    <property type="match status" value="1"/>
</dbReference>
<accession>Q9RXK1</accession>
<organism>
    <name type="scientific">Deinococcus radiodurans (strain ATCC 13939 / DSM 20539 / JCM 16871 / CCUG 27074 / LMG 4051 / NBRC 15346 / NCIMB 9279 / VKM B-1422 / R1)</name>
    <dbReference type="NCBI Taxonomy" id="243230"/>
    <lineage>
        <taxon>Bacteria</taxon>
        <taxon>Thermotogati</taxon>
        <taxon>Deinococcota</taxon>
        <taxon>Deinococci</taxon>
        <taxon>Deinococcales</taxon>
        <taxon>Deinococcaceae</taxon>
        <taxon>Deinococcus</taxon>
    </lineage>
</organism>
<feature type="initiator methionine" description="Removed">
    <location>
        <position position="1"/>
    </location>
</feature>
<feature type="chain" id="PRO_0000129214" description="Large ribosomal subunit protein uL4">
    <location>
        <begin position="2"/>
        <end position="205"/>
    </location>
</feature>
<feature type="strand" evidence="12">
    <location>
        <begin position="6"/>
        <end position="8"/>
    </location>
</feature>
<feature type="turn" evidence="11">
    <location>
        <begin position="19"/>
        <end position="21"/>
    </location>
</feature>
<feature type="helix" evidence="11">
    <location>
        <begin position="24"/>
        <end position="36"/>
    </location>
</feature>
<feature type="turn" evidence="11">
    <location>
        <begin position="48"/>
        <end position="50"/>
    </location>
</feature>
<feature type="strand" evidence="11">
    <location>
        <begin position="61"/>
        <end position="66"/>
    </location>
</feature>
<feature type="strand" evidence="11">
    <location>
        <begin position="72"/>
        <end position="74"/>
    </location>
</feature>
<feature type="strand" evidence="12">
    <location>
        <begin position="77"/>
        <end position="80"/>
    </location>
</feature>
<feature type="helix" evidence="11">
    <location>
        <begin position="97"/>
        <end position="112"/>
    </location>
</feature>
<feature type="turn" evidence="11">
    <location>
        <begin position="113"/>
        <end position="115"/>
    </location>
</feature>
<feature type="strand" evidence="11">
    <location>
        <begin position="117"/>
        <end position="122"/>
    </location>
</feature>
<feature type="turn" evidence="9">
    <location>
        <begin position="123"/>
        <end position="125"/>
    </location>
</feature>
<feature type="turn" evidence="11">
    <location>
        <begin position="126"/>
        <end position="128"/>
    </location>
</feature>
<feature type="helix" evidence="11">
    <location>
        <begin position="130"/>
        <end position="139"/>
    </location>
</feature>
<feature type="strand" evidence="11">
    <location>
        <begin position="144"/>
        <end position="146"/>
    </location>
</feature>
<feature type="strand" evidence="11">
    <location>
        <begin position="148"/>
        <end position="153"/>
    </location>
</feature>
<feature type="helix" evidence="11">
    <location>
        <begin position="155"/>
        <end position="161"/>
    </location>
</feature>
<feature type="turn" evidence="10">
    <location>
        <begin position="164"/>
        <end position="166"/>
    </location>
</feature>
<feature type="strand" evidence="11">
    <location>
        <begin position="167"/>
        <end position="171"/>
    </location>
</feature>
<feature type="helix" evidence="11">
    <location>
        <begin position="177"/>
        <end position="182"/>
    </location>
</feature>
<feature type="strand" evidence="11">
    <location>
        <begin position="183"/>
        <end position="190"/>
    </location>
</feature>
<feature type="turn" evidence="11">
    <location>
        <begin position="191"/>
        <end position="197"/>
    </location>
</feature>
<reference key="1">
    <citation type="journal article" date="1999" name="Science">
        <title>Genome sequence of the radioresistant bacterium Deinococcus radiodurans R1.</title>
        <authorList>
            <person name="White O."/>
            <person name="Eisen J.A."/>
            <person name="Heidelberg J.F."/>
            <person name="Hickey E.K."/>
            <person name="Peterson J.D."/>
            <person name="Dodson R.J."/>
            <person name="Haft D.H."/>
            <person name="Gwinn M.L."/>
            <person name="Nelson W.C."/>
            <person name="Richardson D.L."/>
            <person name="Moffat K.S."/>
            <person name="Qin H."/>
            <person name="Jiang L."/>
            <person name="Pamphile W."/>
            <person name="Crosby M."/>
            <person name="Shen M."/>
            <person name="Vamathevan J.J."/>
            <person name="Lam P."/>
            <person name="McDonald L.A."/>
            <person name="Utterback T.R."/>
            <person name="Zalewski C."/>
            <person name="Makarova K.S."/>
            <person name="Aravind L."/>
            <person name="Daly M.J."/>
            <person name="Minton K.W."/>
            <person name="Fleischmann R.D."/>
            <person name="Ketchum K.A."/>
            <person name="Nelson K.E."/>
            <person name="Salzberg S.L."/>
            <person name="Smith H.O."/>
            <person name="Venter J.C."/>
            <person name="Fraser C.M."/>
        </authorList>
    </citation>
    <scope>NUCLEOTIDE SEQUENCE [LARGE SCALE GENOMIC DNA]</scope>
    <source>
        <strain>ATCC 13939 / DSM 20539 / JCM 16871 / CCUG 27074 / LMG 4051 / NBRC 15346 / NCIMB 9279 / VKM B-1422 / R1</strain>
    </source>
</reference>
<reference key="2">
    <citation type="journal article" date="2001" name="Cell">
        <title>High resolution structure of the large ribosomal subunit from a mesophilic eubacterium.</title>
        <authorList>
            <person name="Harms J."/>
            <person name="Schluenzen F."/>
            <person name="Zarivach R."/>
            <person name="Bashan A."/>
            <person name="Gat S."/>
            <person name="Agmon I."/>
            <person name="Bartels H."/>
            <person name="Franceschi F."/>
            <person name="Yonath A."/>
        </authorList>
    </citation>
    <scope>X-RAY CRYSTALLOGRAPHY (3.1 ANGSTROMS) OF THE 50S SUBUNIT</scope>
    <scope>PROTEIN SEQUENCE OF 1-6</scope>
    <source>
        <strain>ATCC 13939 / DSM 20539 / JCM 16871 / CCUG 27074 / LMG 4051 / NBRC 15346 / NCIMB 9279 / VKM B-1422 / R1</strain>
    </source>
</reference>
<reference key="3">
    <citation type="journal article" date="2001" name="Nature">
        <title>Structural basis for the interaction of antibiotics with the peptidyl transferase centre in eubacteria.</title>
        <authorList>
            <person name="Schluenzen F."/>
            <person name="Zarivach R."/>
            <person name="Harms J."/>
            <person name="Bashan A."/>
            <person name="Tocilj A."/>
            <person name="Albrecht R."/>
            <person name="Yonath A."/>
            <person name="Franceschi F."/>
        </authorList>
    </citation>
    <scope>X-RAY CRYSTALLOGRAPHY (3.1 ANGSTROMS) OF THE 50S SUBUNIT IN COMPLEX WITH FIVE ANTIBIOTICS</scope>
    <source>
        <strain>ATCC 13939 / DSM 20539 / JCM 16871 / CCUG 27074 / LMG 4051 / NBRC 15346 / NCIMB 9279 / VKM B-1422 / R1</strain>
    </source>
</reference>
<reference key="4">
    <citation type="journal article" date="2003" name="Mol. Cell">
        <title>Structural basis of the ribosomal machinery for peptide bond formation, translocation, and nascent chain progression.</title>
        <authorList>
            <person name="Bashan A."/>
            <person name="Agmon I."/>
            <person name="Zarivach R."/>
            <person name="Schluenzen F."/>
            <person name="Harms J."/>
            <person name="Berisio R."/>
            <person name="Bartels H."/>
            <person name="Franceschi F."/>
            <person name="Auerbach T."/>
            <person name="Hansen H.A."/>
            <person name="Kossoy E."/>
            <person name="Kessler M."/>
            <person name="Yonath A."/>
        </authorList>
    </citation>
    <scope>X-RAY CRYSTALLOGRAPHY (3.5 ANGSTROMS) OF THE 50S SUBUNIT IN COMPLEX WITH TRNA MIMICS</scope>
    <source>
        <strain>ATCC 13939 / DSM 20539 / JCM 16871 / CCUG 27074 / LMG 4051 / NBRC 15346 / NCIMB 9279 / VKM B-1422 / R1</strain>
    </source>
</reference>
<reference key="5">
    <citation type="journal article" date="2003" name="Structure">
        <title>Structural basis for the antibiotic activity of ketolides and azalides.</title>
        <authorList>
            <person name="Schluenzen F."/>
            <person name="Harms J.M."/>
            <person name="Franceschi F."/>
            <person name="Hansen H.A."/>
            <person name="Bartels H."/>
            <person name="Zarivach R."/>
            <person name="Yonath A."/>
        </authorList>
    </citation>
    <scope>X-RAY CRYSTALLOGRAPHY (3.3 ANGSTROMS) OF THE 50S SUBUNIT IN COMPLEX WITH MODIFIED MACROLIDE ANTIBIOTICS</scope>
    <source>
        <strain>ATCC 13939 / DSM 20539 / JCM 16871 / CCUG 27074 / LMG 4051 / NBRC 15346 / NCIMB 9279 / VKM B-1422 / R1</strain>
    </source>
</reference>
<reference key="6">
    <citation type="journal article" date="2003" name="Nat. Struct. Biol.">
        <title>Structural insight into the role of the ribosomal tunnel in cellular regulation.</title>
        <authorList>
            <person name="Berisio R."/>
            <person name="Schluenzen F."/>
            <person name="Harms J."/>
            <person name="Bashan A."/>
            <person name="Auerbach T."/>
            <person name="Baram D."/>
            <person name="Yonath A."/>
        </authorList>
    </citation>
    <scope>X-RAY CRYSTALLOGRAPHY (3.4 ANGSTROMS) OF THE 50S SUBUNIT IN COMPLEX WITH TROLEANDOMYCIN</scope>
    <source>
        <strain>ATCC 13939 / DSM 20539 / JCM 16871 / CCUG 27074 / LMG 4051 / NBRC 15346 / NCIMB 9279 / VKM B-1422 / R1</strain>
    </source>
</reference>
<reference key="7">
    <citation type="journal article" date="2004" name="BMC Biol.">
        <title>Alterations at the peptidyl transferase centre of the ribosome induced by the synergistic action of the streptogramins dalfopristin and quinupristin.</title>
        <authorList>
            <person name="Harms J.M."/>
            <person name="Schluenzen F."/>
            <person name="Fucini P."/>
            <person name="Bartels H."/>
            <person name="Yonath A."/>
        </authorList>
    </citation>
    <scope>X-RAY CRYSTALLOGRAPHY (3.4 ANGSTROMS) OF THE 50S SUBUNIT IN COMPLEX WITH THE STREPTOGRAMINS QUINUPRISTIN AND DALFOPRISTIN</scope>
    <source>
        <strain>ATCC 13939 / DSM 20539 / JCM 16871 / CCUG 27074 / LMG 4051 / NBRC 15346 / NCIMB 9279 / VKM B-1422 / R1</strain>
    </source>
</reference>
<reference key="8">
    <citation type="journal article" date="2004" name="Mol. Microbiol.">
        <title>Inhibition of peptide bond formation by pleuromutilins: the structure of the 50S ribosomal subunit from Deinococcus radiodurans in complex with tiamulin.</title>
        <authorList>
            <person name="Schluenzen F."/>
            <person name="Pyetan E."/>
            <person name="Fucini P."/>
            <person name="Yonath A."/>
            <person name="Harms J.M."/>
        </authorList>
    </citation>
    <scope>X-RAY CRYSTALLOGRAPHY (3.5 ANGSTROMS) OF THE 50S SUBUNIT IN COMPLEX WITH TIAMULIN</scope>
    <source>
        <strain>ATCC 13939 / DSM 20539 / JCM 16871 / CCUG 27074 / LMG 4051 / NBRC 15346 / NCIMB 9279 / VKM B-1422 / R1</strain>
    </source>
</reference>
<name>RL4_DEIRA</name>
<protein>
    <recommendedName>
        <fullName evidence="8">Large ribosomal subunit protein uL4</fullName>
    </recommendedName>
    <alternativeName>
        <fullName>50S ribosomal protein L4</fullName>
    </alternativeName>
</protein>
<comment type="function">
    <text evidence="1">One of the primary rRNA binding proteins, this protein initially binds near the 5'-end of the 23S rRNA. It is important during the early stages of 50S assembly (By similarity).</text>
</comment>
<comment type="function">
    <text>Makes multiple contacts with different domains of the 23S rRNA in the assembled 50S subunit.</text>
</comment>
<comment type="function">
    <text>This protein is located close to the polypeptide exit tunnel, and interacts with the modified macrolide azithromycin, which blocks the tunnel.</text>
</comment>
<comment type="subunit">
    <text evidence="2 3 4 5 6 7">Part of the 50S ribosomal subunit. Contacts proteins L15 and L34.</text>
</comment>
<comment type="similarity">
    <text evidence="8">Belongs to the universal ribosomal protein uL4 family.</text>
</comment>
<evidence type="ECO:0000250" key="1"/>
<evidence type="ECO:0000269" key="2">
    <source>
    </source>
</evidence>
<evidence type="ECO:0000269" key="3">
    <source>
    </source>
</evidence>
<evidence type="ECO:0000269" key="4">
    <source>
    </source>
</evidence>
<evidence type="ECO:0000269" key="5">
    <source>
    </source>
</evidence>
<evidence type="ECO:0000269" key="6">
    <source>
    </source>
</evidence>
<evidence type="ECO:0000269" key="7">
    <source>
    </source>
</evidence>
<evidence type="ECO:0000305" key="8"/>
<evidence type="ECO:0007829" key="9">
    <source>
        <dbReference type="PDB" id="4IO9"/>
    </source>
</evidence>
<evidence type="ECO:0007829" key="10">
    <source>
        <dbReference type="PDB" id="4IOA"/>
    </source>
</evidence>
<evidence type="ECO:0007829" key="11">
    <source>
        <dbReference type="PDB" id="5DM6"/>
    </source>
</evidence>
<evidence type="ECO:0007829" key="12">
    <source>
        <dbReference type="PDB" id="5DM7"/>
    </source>
</evidence>